<comment type="function">
    <text evidence="1">Binds to DNA and alters its conformation. May be involved in regulation of gene expression, nucleoid organization and DNA protection.</text>
</comment>
<comment type="subunit">
    <text evidence="1">Homodimer.</text>
</comment>
<comment type="subcellular location">
    <subcellularLocation>
        <location evidence="1">Cytoplasm</location>
        <location evidence="1">Nucleoid</location>
    </subcellularLocation>
</comment>
<comment type="similarity">
    <text evidence="1">Belongs to the YbaB/EbfC family.</text>
</comment>
<evidence type="ECO:0000255" key="1">
    <source>
        <dbReference type="HAMAP-Rule" id="MF_00274"/>
    </source>
</evidence>
<evidence type="ECO:0000256" key="2">
    <source>
        <dbReference type="SAM" id="MobiDB-lite"/>
    </source>
</evidence>
<feature type="chain" id="PRO_1000059208" description="Nucleoid-associated protein YpsIP31758_3058">
    <location>
        <begin position="1"/>
        <end position="110"/>
    </location>
</feature>
<feature type="region of interest" description="Disordered" evidence="2">
    <location>
        <begin position="90"/>
        <end position="110"/>
    </location>
</feature>
<dbReference type="EMBL" id="CP000720">
    <property type="protein sequence ID" value="ABS48843.1"/>
    <property type="molecule type" value="Genomic_DNA"/>
</dbReference>
<dbReference type="RefSeq" id="WP_002208604.1">
    <property type="nucleotide sequence ID" value="NC_009708.1"/>
</dbReference>
<dbReference type="SMR" id="A7FL90"/>
<dbReference type="KEGG" id="ypi:YpsIP31758_3058"/>
<dbReference type="HOGENOM" id="CLU_140930_0_0_6"/>
<dbReference type="Proteomes" id="UP000002412">
    <property type="component" value="Chromosome"/>
</dbReference>
<dbReference type="GO" id="GO:0043590">
    <property type="term" value="C:bacterial nucleoid"/>
    <property type="evidence" value="ECO:0007669"/>
    <property type="project" value="UniProtKB-UniRule"/>
</dbReference>
<dbReference type="GO" id="GO:0005829">
    <property type="term" value="C:cytosol"/>
    <property type="evidence" value="ECO:0007669"/>
    <property type="project" value="TreeGrafter"/>
</dbReference>
<dbReference type="GO" id="GO:0003677">
    <property type="term" value="F:DNA binding"/>
    <property type="evidence" value="ECO:0007669"/>
    <property type="project" value="UniProtKB-UniRule"/>
</dbReference>
<dbReference type="FunFam" id="3.30.1310.10:FF:000001">
    <property type="entry name" value="Nucleoid-associated protein YbaB"/>
    <property type="match status" value="1"/>
</dbReference>
<dbReference type="Gene3D" id="3.30.1310.10">
    <property type="entry name" value="Nucleoid-associated protein YbaB-like domain"/>
    <property type="match status" value="1"/>
</dbReference>
<dbReference type="HAMAP" id="MF_00274">
    <property type="entry name" value="DNA_YbaB_EbfC"/>
    <property type="match status" value="1"/>
</dbReference>
<dbReference type="InterPro" id="IPR036894">
    <property type="entry name" value="YbaB-like_sf"/>
</dbReference>
<dbReference type="InterPro" id="IPR004401">
    <property type="entry name" value="YbaB/EbfC"/>
</dbReference>
<dbReference type="NCBIfam" id="TIGR00103">
    <property type="entry name" value="DNA_YbaB_EbfC"/>
    <property type="match status" value="1"/>
</dbReference>
<dbReference type="PANTHER" id="PTHR33449">
    <property type="entry name" value="NUCLEOID-ASSOCIATED PROTEIN YBAB"/>
    <property type="match status" value="1"/>
</dbReference>
<dbReference type="PANTHER" id="PTHR33449:SF1">
    <property type="entry name" value="NUCLEOID-ASSOCIATED PROTEIN YBAB"/>
    <property type="match status" value="1"/>
</dbReference>
<dbReference type="Pfam" id="PF02575">
    <property type="entry name" value="YbaB_DNA_bd"/>
    <property type="match status" value="1"/>
</dbReference>
<dbReference type="PIRSF" id="PIRSF004555">
    <property type="entry name" value="UCP004555"/>
    <property type="match status" value="1"/>
</dbReference>
<dbReference type="SUPFAM" id="SSF82607">
    <property type="entry name" value="YbaB-like"/>
    <property type="match status" value="1"/>
</dbReference>
<proteinExistence type="inferred from homology"/>
<accession>A7FL90</accession>
<organism>
    <name type="scientific">Yersinia pseudotuberculosis serotype O:1b (strain IP 31758)</name>
    <dbReference type="NCBI Taxonomy" id="349747"/>
    <lineage>
        <taxon>Bacteria</taxon>
        <taxon>Pseudomonadati</taxon>
        <taxon>Pseudomonadota</taxon>
        <taxon>Gammaproteobacteria</taxon>
        <taxon>Enterobacterales</taxon>
        <taxon>Yersiniaceae</taxon>
        <taxon>Yersinia</taxon>
    </lineage>
</organism>
<protein>
    <recommendedName>
        <fullName evidence="1">Nucleoid-associated protein YpsIP31758_3058</fullName>
    </recommendedName>
</protein>
<keyword id="KW-0963">Cytoplasm</keyword>
<keyword id="KW-0238">DNA-binding</keyword>
<reference key="1">
    <citation type="journal article" date="2007" name="PLoS Genet.">
        <title>The complete genome sequence of Yersinia pseudotuberculosis IP31758, the causative agent of Far East scarlet-like fever.</title>
        <authorList>
            <person name="Eppinger M."/>
            <person name="Rosovitz M.J."/>
            <person name="Fricke W.F."/>
            <person name="Rasko D.A."/>
            <person name="Kokorina G."/>
            <person name="Fayolle C."/>
            <person name="Lindler L.E."/>
            <person name="Carniel E."/>
            <person name="Ravel J."/>
        </authorList>
    </citation>
    <scope>NUCLEOTIDE SEQUENCE [LARGE SCALE GENOMIC DNA]</scope>
    <source>
        <strain>IP 31758</strain>
    </source>
</reference>
<sequence>MFGKGGIGNLMKQAQQMQEKMQQMQEEVAKLEVTGESGAGLVKVTINGAHNCRRVEIDPSLLVEDDKEMLEDLIAAALNDAARRIDETQKEKMASVSNGMQLPPGFKMPF</sequence>
<gene>
    <name type="ordered locus">YpsIP31758_3058</name>
</gene>
<name>Y3058_YERP3</name>